<gene>
    <name type="ordered locus">NFA_10960</name>
</gene>
<sequence>MTMARVLVASRNAKKLAELRRILDDAGVAGVQIVGLDDVPPYDEAPETGATFEENALAKARDGAAATGLPCVADDSGLAVDALNGMPGVLSARWSGTHGDDAANNALLLAQLRDVPDERRGARFVSACALVVPGGTETVVRGEWPGTIGRKPMGEGGFGYDPLFVPDGGDVTAAQLTPAAKDAASHRGRALRHLLPALAALADRTE</sequence>
<accession>Q5Z0V0</accession>
<feature type="chain" id="PRO_0000178202" description="dITP/XTP pyrophosphatase">
    <location>
        <begin position="1"/>
        <end position="206"/>
    </location>
</feature>
<feature type="active site" description="Proton acceptor" evidence="1">
    <location>
        <position position="75"/>
    </location>
</feature>
<feature type="binding site" evidence="1">
    <location>
        <begin position="10"/>
        <end position="15"/>
    </location>
    <ligand>
        <name>substrate</name>
    </ligand>
</feature>
<feature type="binding site" evidence="1">
    <location>
        <position position="75"/>
    </location>
    <ligand>
        <name>Mg(2+)</name>
        <dbReference type="ChEBI" id="CHEBI:18420"/>
    </ligand>
</feature>
<feature type="binding site" evidence="1">
    <location>
        <position position="76"/>
    </location>
    <ligand>
        <name>substrate</name>
    </ligand>
</feature>
<feature type="binding site" evidence="1">
    <location>
        <begin position="158"/>
        <end position="161"/>
    </location>
    <ligand>
        <name>substrate</name>
    </ligand>
</feature>
<feature type="binding site" evidence="1">
    <location>
        <position position="181"/>
    </location>
    <ligand>
        <name>substrate</name>
    </ligand>
</feature>
<feature type="binding site" evidence="1">
    <location>
        <begin position="186"/>
        <end position="187"/>
    </location>
    <ligand>
        <name>substrate</name>
    </ligand>
</feature>
<name>IXTPA_NOCFA</name>
<reference key="1">
    <citation type="journal article" date="2004" name="Proc. Natl. Acad. Sci. U.S.A.">
        <title>The complete genomic sequence of Nocardia farcinica IFM 10152.</title>
        <authorList>
            <person name="Ishikawa J."/>
            <person name="Yamashita A."/>
            <person name="Mikami Y."/>
            <person name="Hoshino Y."/>
            <person name="Kurita H."/>
            <person name="Hotta K."/>
            <person name="Shiba T."/>
            <person name="Hattori M."/>
        </authorList>
    </citation>
    <scope>NUCLEOTIDE SEQUENCE [LARGE SCALE GENOMIC DNA]</scope>
    <source>
        <strain>IFM 10152</strain>
    </source>
</reference>
<protein>
    <recommendedName>
        <fullName evidence="1">dITP/XTP pyrophosphatase</fullName>
        <ecNumber evidence="1">3.6.1.66</ecNumber>
    </recommendedName>
    <alternativeName>
        <fullName evidence="1">Non-canonical purine NTP pyrophosphatase</fullName>
    </alternativeName>
    <alternativeName>
        <fullName evidence="1">Non-standard purine NTP pyrophosphatase</fullName>
    </alternativeName>
    <alternativeName>
        <fullName evidence="1">Nucleoside-triphosphate diphosphatase</fullName>
    </alternativeName>
    <alternativeName>
        <fullName evidence="1">Nucleoside-triphosphate pyrophosphatase</fullName>
        <shortName evidence="1">NTPase</shortName>
    </alternativeName>
</protein>
<dbReference type="EC" id="3.6.1.66" evidence="1"/>
<dbReference type="EMBL" id="AP006618">
    <property type="protein sequence ID" value="BAD55941.1"/>
    <property type="molecule type" value="Genomic_DNA"/>
</dbReference>
<dbReference type="SMR" id="Q5Z0V0"/>
<dbReference type="STRING" id="247156.NFA_10960"/>
<dbReference type="KEGG" id="nfa:NFA_10960"/>
<dbReference type="eggNOG" id="COG0127">
    <property type="taxonomic scope" value="Bacteria"/>
</dbReference>
<dbReference type="HOGENOM" id="CLU_082080_0_1_11"/>
<dbReference type="Proteomes" id="UP000006820">
    <property type="component" value="Chromosome"/>
</dbReference>
<dbReference type="GO" id="GO:0005829">
    <property type="term" value="C:cytosol"/>
    <property type="evidence" value="ECO:0007669"/>
    <property type="project" value="TreeGrafter"/>
</dbReference>
<dbReference type="GO" id="GO:0035870">
    <property type="term" value="F:dITP diphosphatase activity"/>
    <property type="evidence" value="ECO:0007669"/>
    <property type="project" value="RHEA"/>
</dbReference>
<dbReference type="GO" id="GO:0036220">
    <property type="term" value="F:ITP diphosphatase activity"/>
    <property type="evidence" value="ECO:0007669"/>
    <property type="project" value="UniProtKB-EC"/>
</dbReference>
<dbReference type="GO" id="GO:0046872">
    <property type="term" value="F:metal ion binding"/>
    <property type="evidence" value="ECO:0007669"/>
    <property type="project" value="UniProtKB-KW"/>
</dbReference>
<dbReference type="GO" id="GO:0000166">
    <property type="term" value="F:nucleotide binding"/>
    <property type="evidence" value="ECO:0007669"/>
    <property type="project" value="UniProtKB-KW"/>
</dbReference>
<dbReference type="GO" id="GO:0017111">
    <property type="term" value="F:ribonucleoside triphosphate phosphatase activity"/>
    <property type="evidence" value="ECO:0007669"/>
    <property type="project" value="InterPro"/>
</dbReference>
<dbReference type="GO" id="GO:0036222">
    <property type="term" value="F:XTP diphosphatase activity"/>
    <property type="evidence" value="ECO:0007669"/>
    <property type="project" value="RHEA"/>
</dbReference>
<dbReference type="GO" id="GO:0009117">
    <property type="term" value="P:nucleotide metabolic process"/>
    <property type="evidence" value="ECO:0007669"/>
    <property type="project" value="UniProtKB-KW"/>
</dbReference>
<dbReference type="GO" id="GO:0009146">
    <property type="term" value="P:purine nucleoside triphosphate catabolic process"/>
    <property type="evidence" value="ECO:0007669"/>
    <property type="project" value="UniProtKB-UniRule"/>
</dbReference>
<dbReference type="CDD" id="cd00515">
    <property type="entry name" value="HAM1"/>
    <property type="match status" value="1"/>
</dbReference>
<dbReference type="FunFam" id="3.90.950.10:FF:000001">
    <property type="entry name" value="dITP/XTP pyrophosphatase"/>
    <property type="match status" value="1"/>
</dbReference>
<dbReference type="Gene3D" id="3.90.950.10">
    <property type="match status" value="1"/>
</dbReference>
<dbReference type="HAMAP" id="MF_01405">
    <property type="entry name" value="Non_canon_purine_NTPase"/>
    <property type="match status" value="1"/>
</dbReference>
<dbReference type="InterPro" id="IPR020922">
    <property type="entry name" value="dITP/XTP_pyrophosphatase"/>
</dbReference>
<dbReference type="InterPro" id="IPR029001">
    <property type="entry name" value="ITPase-like_fam"/>
</dbReference>
<dbReference type="InterPro" id="IPR002637">
    <property type="entry name" value="RdgB/HAM1"/>
</dbReference>
<dbReference type="NCBIfam" id="TIGR00042">
    <property type="entry name" value="RdgB/HAM1 family non-canonical purine NTP pyrophosphatase"/>
    <property type="match status" value="1"/>
</dbReference>
<dbReference type="PANTHER" id="PTHR11067:SF9">
    <property type="entry name" value="INOSINE TRIPHOSPHATE PYROPHOSPHATASE"/>
    <property type="match status" value="1"/>
</dbReference>
<dbReference type="PANTHER" id="PTHR11067">
    <property type="entry name" value="INOSINE TRIPHOSPHATE PYROPHOSPHATASE/HAM1 PROTEIN"/>
    <property type="match status" value="1"/>
</dbReference>
<dbReference type="Pfam" id="PF01725">
    <property type="entry name" value="Ham1p_like"/>
    <property type="match status" value="1"/>
</dbReference>
<dbReference type="SUPFAM" id="SSF52972">
    <property type="entry name" value="ITPase-like"/>
    <property type="match status" value="1"/>
</dbReference>
<organism>
    <name type="scientific">Nocardia farcinica (strain IFM 10152)</name>
    <dbReference type="NCBI Taxonomy" id="247156"/>
    <lineage>
        <taxon>Bacteria</taxon>
        <taxon>Bacillati</taxon>
        <taxon>Actinomycetota</taxon>
        <taxon>Actinomycetes</taxon>
        <taxon>Mycobacteriales</taxon>
        <taxon>Nocardiaceae</taxon>
        <taxon>Nocardia</taxon>
    </lineage>
</organism>
<keyword id="KW-0378">Hydrolase</keyword>
<keyword id="KW-0460">Magnesium</keyword>
<keyword id="KW-0479">Metal-binding</keyword>
<keyword id="KW-0546">Nucleotide metabolism</keyword>
<keyword id="KW-0547">Nucleotide-binding</keyword>
<keyword id="KW-1185">Reference proteome</keyword>
<evidence type="ECO:0000255" key="1">
    <source>
        <dbReference type="HAMAP-Rule" id="MF_01405"/>
    </source>
</evidence>
<comment type="function">
    <text evidence="1">Pyrophosphatase that catalyzes the hydrolysis of nucleoside triphosphates to their monophosphate derivatives, with a high preference for the non-canonical purine nucleotides XTP (xanthosine triphosphate), dITP (deoxyinosine triphosphate) and ITP. Seems to function as a house-cleaning enzyme that removes non-canonical purine nucleotides from the nucleotide pool, thus preventing their incorporation into DNA/RNA and avoiding chromosomal lesions.</text>
</comment>
<comment type="catalytic activity">
    <reaction evidence="1">
        <text>XTP + H2O = XMP + diphosphate + H(+)</text>
        <dbReference type="Rhea" id="RHEA:28610"/>
        <dbReference type="ChEBI" id="CHEBI:15377"/>
        <dbReference type="ChEBI" id="CHEBI:15378"/>
        <dbReference type="ChEBI" id="CHEBI:33019"/>
        <dbReference type="ChEBI" id="CHEBI:57464"/>
        <dbReference type="ChEBI" id="CHEBI:61314"/>
        <dbReference type="EC" id="3.6.1.66"/>
    </reaction>
</comment>
<comment type="catalytic activity">
    <reaction evidence="1">
        <text>dITP + H2O = dIMP + diphosphate + H(+)</text>
        <dbReference type="Rhea" id="RHEA:28342"/>
        <dbReference type="ChEBI" id="CHEBI:15377"/>
        <dbReference type="ChEBI" id="CHEBI:15378"/>
        <dbReference type="ChEBI" id="CHEBI:33019"/>
        <dbReference type="ChEBI" id="CHEBI:61194"/>
        <dbReference type="ChEBI" id="CHEBI:61382"/>
        <dbReference type="EC" id="3.6.1.66"/>
    </reaction>
</comment>
<comment type="catalytic activity">
    <reaction evidence="1">
        <text>ITP + H2O = IMP + diphosphate + H(+)</text>
        <dbReference type="Rhea" id="RHEA:29399"/>
        <dbReference type="ChEBI" id="CHEBI:15377"/>
        <dbReference type="ChEBI" id="CHEBI:15378"/>
        <dbReference type="ChEBI" id="CHEBI:33019"/>
        <dbReference type="ChEBI" id="CHEBI:58053"/>
        <dbReference type="ChEBI" id="CHEBI:61402"/>
        <dbReference type="EC" id="3.6.1.66"/>
    </reaction>
</comment>
<comment type="cofactor">
    <cofactor evidence="1">
        <name>Mg(2+)</name>
        <dbReference type="ChEBI" id="CHEBI:18420"/>
    </cofactor>
    <text evidence="1">Binds 1 Mg(2+) ion per subunit.</text>
</comment>
<comment type="subunit">
    <text evidence="1">Homodimer.</text>
</comment>
<comment type="similarity">
    <text evidence="1">Belongs to the HAM1 NTPase family.</text>
</comment>
<proteinExistence type="inferred from homology"/>